<reference key="1">
    <citation type="journal article" date="2004" name="Nat. Genet.">
        <title>Comparison of genome degradation in Paratyphi A and Typhi, human-restricted serovars of Salmonella enterica that cause typhoid.</title>
        <authorList>
            <person name="McClelland M."/>
            <person name="Sanderson K.E."/>
            <person name="Clifton S.W."/>
            <person name="Latreille P."/>
            <person name="Porwollik S."/>
            <person name="Sabo A."/>
            <person name="Meyer R."/>
            <person name="Bieri T."/>
            <person name="Ozersky P."/>
            <person name="McLellan M."/>
            <person name="Harkins C.R."/>
            <person name="Wang C."/>
            <person name="Nguyen C."/>
            <person name="Berghoff A."/>
            <person name="Elliott G."/>
            <person name="Kohlberg S."/>
            <person name="Strong C."/>
            <person name="Du F."/>
            <person name="Carter J."/>
            <person name="Kremizki C."/>
            <person name="Layman D."/>
            <person name="Leonard S."/>
            <person name="Sun H."/>
            <person name="Fulton L."/>
            <person name="Nash W."/>
            <person name="Miner T."/>
            <person name="Minx P."/>
            <person name="Delehaunty K."/>
            <person name="Fronick C."/>
            <person name="Magrini V."/>
            <person name="Nhan M."/>
            <person name="Warren W."/>
            <person name="Florea L."/>
            <person name="Spieth J."/>
            <person name="Wilson R.K."/>
        </authorList>
    </citation>
    <scope>NUCLEOTIDE SEQUENCE [LARGE SCALE GENOMIC DNA]</scope>
    <source>
        <strain>ATCC 9150 / SARB42</strain>
    </source>
</reference>
<protein>
    <recommendedName>
        <fullName evidence="1">Aspartate carbamoyltransferase catalytic subunit</fullName>
        <ecNumber evidence="1">2.1.3.2</ecNumber>
    </recommendedName>
    <alternativeName>
        <fullName evidence="1">Aspartate transcarbamylase</fullName>
        <shortName evidence="1">ATCase</shortName>
    </alternativeName>
</protein>
<gene>
    <name evidence="1" type="primary">pyrB</name>
    <name type="ordered locus">SPA4261</name>
</gene>
<dbReference type="EC" id="2.1.3.2" evidence="1"/>
<dbReference type="EMBL" id="CP000026">
    <property type="protein sequence ID" value="AAV79995.1"/>
    <property type="molecule type" value="Genomic_DNA"/>
</dbReference>
<dbReference type="RefSeq" id="WP_000013055.1">
    <property type="nucleotide sequence ID" value="NC_006511.1"/>
</dbReference>
<dbReference type="SMR" id="Q5PJB2"/>
<dbReference type="KEGG" id="spt:SPA4261"/>
<dbReference type="HOGENOM" id="CLU_043846_1_2_6"/>
<dbReference type="UniPathway" id="UPA00070">
    <property type="reaction ID" value="UER00116"/>
</dbReference>
<dbReference type="Proteomes" id="UP000008185">
    <property type="component" value="Chromosome"/>
</dbReference>
<dbReference type="GO" id="GO:0005829">
    <property type="term" value="C:cytosol"/>
    <property type="evidence" value="ECO:0007669"/>
    <property type="project" value="TreeGrafter"/>
</dbReference>
<dbReference type="GO" id="GO:0016597">
    <property type="term" value="F:amino acid binding"/>
    <property type="evidence" value="ECO:0007669"/>
    <property type="project" value="InterPro"/>
</dbReference>
<dbReference type="GO" id="GO:0004070">
    <property type="term" value="F:aspartate carbamoyltransferase activity"/>
    <property type="evidence" value="ECO:0007669"/>
    <property type="project" value="UniProtKB-UniRule"/>
</dbReference>
<dbReference type="GO" id="GO:0006207">
    <property type="term" value="P:'de novo' pyrimidine nucleobase biosynthetic process"/>
    <property type="evidence" value="ECO:0007669"/>
    <property type="project" value="InterPro"/>
</dbReference>
<dbReference type="GO" id="GO:0044205">
    <property type="term" value="P:'de novo' UMP biosynthetic process"/>
    <property type="evidence" value="ECO:0007669"/>
    <property type="project" value="UniProtKB-UniRule"/>
</dbReference>
<dbReference type="GO" id="GO:0006520">
    <property type="term" value="P:amino acid metabolic process"/>
    <property type="evidence" value="ECO:0007669"/>
    <property type="project" value="InterPro"/>
</dbReference>
<dbReference type="FunFam" id="3.40.50.1370:FF:000001">
    <property type="entry name" value="Aspartate carbamoyltransferase"/>
    <property type="match status" value="1"/>
</dbReference>
<dbReference type="FunFam" id="3.40.50.1370:FF:000002">
    <property type="entry name" value="Aspartate carbamoyltransferase 2"/>
    <property type="match status" value="1"/>
</dbReference>
<dbReference type="Gene3D" id="3.40.50.1370">
    <property type="entry name" value="Aspartate/ornithine carbamoyltransferase"/>
    <property type="match status" value="2"/>
</dbReference>
<dbReference type="HAMAP" id="MF_00001">
    <property type="entry name" value="Asp_carb_tr"/>
    <property type="match status" value="1"/>
</dbReference>
<dbReference type="InterPro" id="IPR006132">
    <property type="entry name" value="Asp/Orn_carbamoyltranf_P-bd"/>
</dbReference>
<dbReference type="InterPro" id="IPR006130">
    <property type="entry name" value="Asp/Orn_carbamoylTrfase"/>
</dbReference>
<dbReference type="InterPro" id="IPR036901">
    <property type="entry name" value="Asp/Orn_carbamoylTrfase_sf"/>
</dbReference>
<dbReference type="InterPro" id="IPR002082">
    <property type="entry name" value="Asp_carbamoyltransf"/>
</dbReference>
<dbReference type="InterPro" id="IPR006131">
    <property type="entry name" value="Asp_carbamoyltransf_Asp/Orn-bd"/>
</dbReference>
<dbReference type="NCBIfam" id="TIGR00670">
    <property type="entry name" value="asp_carb_tr"/>
    <property type="match status" value="1"/>
</dbReference>
<dbReference type="NCBIfam" id="NF002032">
    <property type="entry name" value="PRK00856.1"/>
    <property type="match status" value="1"/>
</dbReference>
<dbReference type="PANTHER" id="PTHR45753:SF6">
    <property type="entry name" value="ASPARTATE CARBAMOYLTRANSFERASE"/>
    <property type="match status" value="1"/>
</dbReference>
<dbReference type="PANTHER" id="PTHR45753">
    <property type="entry name" value="ORNITHINE CARBAMOYLTRANSFERASE, MITOCHONDRIAL"/>
    <property type="match status" value="1"/>
</dbReference>
<dbReference type="Pfam" id="PF00185">
    <property type="entry name" value="OTCace"/>
    <property type="match status" value="1"/>
</dbReference>
<dbReference type="Pfam" id="PF02729">
    <property type="entry name" value="OTCace_N"/>
    <property type="match status" value="1"/>
</dbReference>
<dbReference type="PRINTS" id="PR00100">
    <property type="entry name" value="AOTCASE"/>
</dbReference>
<dbReference type="PRINTS" id="PR00101">
    <property type="entry name" value="ATCASE"/>
</dbReference>
<dbReference type="SUPFAM" id="SSF53671">
    <property type="entry name" value="Aspartate/ornithine carbamoyltransferase"/>
    <property type="match status" value="1"/>
</dbReference>
<dbReference type="PROSITE" id="PS00097">
    <property type="entry name" value="CARBAMOYLTRANSFERASE"/>
    <property type="match status" value="1"/>
</dbReference>
<accession>Q5PJB2</accession>
<evidence type="ECO:0000255" key="1">
    <source>
        <dbReference type="HAMAP-Rule" id="MF_00001"/>
    </source>
</evidence>
<feature type="chain" id="PRO_0000113187" description="Aspartate carbamoyltransferase catalytic subunit">
    <location>
        <begin position="1"/>
        <end position="311"/>
    </location>
</feature>
<feature type="binding site" evidence="1">
    <location>
        <position position="55"/>
    </location>
    <ligand>
        <name>carbamoyl phosphate</name>
        <dbReference type="ChEBI" id="CHEBI:58228"/>
    </ligand>
</feature>
<feature type="binding site" evidence="1">
    <location>
        <position position="56"/>
    </location>
    <ligand>
        <name>carbamoyl phosphate</name>
        <dbReference type="ChEBI" id="CHEBI:58228"/>
    </ligand>
</feature>
<feature type="binding site" evidence="1">
    <location>
        <position position="85"/>
    </location>
    <ligand>
        <name>L-aspartate</name>
        <dbReference type="ChEBI" id="CHEBI:29991"/>
    </ligand>
</feature>
<feature type="binding site" evidence="1">
    <location>
        <position position="106"/>
    </location>
    <ligand>
        <name>carbamoyl phosphate</name>
        <dbReference type="ChEBI" id="CHEBI:58228"/>
    </ligand>
</feature>
<feature type="binding site" evidence="1">
    <location>
        <position position="135"/>
    </location>
    <ligand>
        <name>carbamoyl phosphate</name>
        <dbReference type="ChEBI" id="CHEBI:58228"/>
    </ligand>
</feature>
<feature type="binding site" evidence="1">
    <location>
        <position position="138"/>
    </location>
    <ligand>
        <name>carbamoyl phosphate</name>
        <dbReference type="ChEBI" id="CHEBI:58228"/>
    </ligand>
</feature>
<feature type="binding site" evidence="1">
    <location>
        <position position="168"/>
    </location>
    <ligand>
        <name>L-aspartate</name>
        <dbReference type="ChEBI" id="CHEBI:29991"/>
    </ligand>
</feature>
<feature type="binding site" evidence="1">
    <location>
        <position position="230"/>
    </location>
    <ligand>
        <name>L-aspartate</name>
        <dbReference type="ChEBI" id="CHEBI:29991"/>
    </ligand>
</feature>
<feature type="binding site" evidence="1">
    <location>
        <position position="268"/>
    </location>
    <ligand>
        <name>carbamoyl phosphate</name>
        <dbReference type="ChEBI" id="CHEBI:58228"/>
    </ligand>
</feature>
<feature type="binding site" evidence="1">
    <location>
        <position position="269"/>
    </location>
    <ligand>
        <name>carbamoyl phosphate</name>
        <dbReference type="ChEBI" id="CHEBI:58228"/>
    </ligand>
</feature>
<proteinExistence type="inferred from homology"/>
<name>PYRB_SALPA</name>
<keyword id="KW-0665">Pyrimidine biosynthesis</keyword>
<keyword id="KW-0808">Transferase</keyword>
<organism>
    <name type="scientific">Salmonella paratyphi A (strain ATCC 9150 / SARB42)</name>
    <dbReference type="NCBI Taxonomy" id="295319"/>
    <lineage>
        <taxon>Bacteria</taxon>
        <taxon>Pseudomonadati</taxon>
        <taxon>Pseudomonadota</taxon>
        <taxon>Gammaproteobacteria</taxon>
        <taxon>Enterobacterales</taxon>
        <taxon>Enterobacteriaceae</taxon>
        <taxon>Salmonella</taxon>
    </lineage>
</organism>
<comment type="function">
    <text evidence="1">Catalyzes the condensation of carbamoyl phosphate and aspartate to form carbamoyl aspartate and inorganic phosphate, the committed step in the de novo pyrimidine nucleotide biosynthesis pathway.</text>
</comment>
<comment type="catalytic activity">
    <reaction evidence="1">
        <text>carbamoyl phosphate + L-aspartate = N-carbamoyl-L-aspartate + phosphate + H(+)</text>
        <dbReference type="Rhea" id="RHEA:20013"/>
        <dbReference type="ChEBI" id="CHEBI:15378"/>
        <dbReference type="ChEBI" id="CHEBI:29991"/>
        <dbReference type="ChEBI" id="CHEBI:32814"/>
        <dbReference type="ChEBI" id="CHEBI:43474"/>
        <dbReference type="ChEBI" id="CHEBI:58228"/>
        <dbReference type="EC" id="2.1.3.2"/>
    </reaction>
</comment>
<comment type="pathway">
    <text evidence="1">Pyrimidine metabolism; UMP biosynthesis via de novo pathway; (S)-dihydroorotate from bicarbonate: step 2/3.</text>
</comment>
<comment type="subunit">
    <text evidence="1">Heterododecamer (2C3:3R2) of six catalytic PyrB chains organized as two trimers (C3), and six regulatory PyrI chains organized as three dimers (R2).</text>
</comment>
<comment type="similarity">
    <text evidence="1">Belongs to the aspartate/ornithine carbamoyltransferase superfamily. ATCase family.</text>
</comment>
<sequence length="311" mass="34384">MANPLYQKHIISINDLSRDDLNLVLATAAKLKANPQPELLKHKVIASCFFEASTRTRLSFETSMHRLGASVVGFSDSANTSLGKKGETLADTISVISTYVDAIVMRHPQEGAARLATEFSGQVPVLNAGDGSNQHPTQTLLDLFTIQETQGRLDNLHIAMVGDLKYGRTVHSLTQALAKFSGNRFYFIAPDALAMPQYILDMLDEKGMAWSLHGSIEEVMADVDILYMTRVQKERLDPSEYANVKAQFVLRASDLNGARENMKVLHPLPRIDEITTDVDKTPHAWYFQQAGNGIFARQALLALVLNSELSL</sequence>